<comment type="function">
    <text evidence="2">Involved in the gluconeogenesis. Catalyzes the conversion of oxaloacetate (OAA) to phosphoenolpyruvate (PEP), the rate-limiting step in the metabolic pathway that produces glucose from lactate and other precursors derived from the citric acid cycle.</text>
</comment>
<comment type="catalytic activity">
    <reaction evidence="1">
        <text>oxaloacetate + GTP = phosphoenolpyruvate + GDP + CO2</text>
        <dbReference type="Rhea" id="RHEA:10388"/>
        <dbReference type="ChEBI" id="CHEBI:16452"/>
        <dbReference type="ChEBI" id="CHEBI:16526"/>
        <dbReference type="ChEBI" id="CHEBI:37565"/>
        <dbReference type="ChEBI" id="CHEBI:58189"/>
        <dbReference type="ChEBI" id="CHEBI:58702"/>
        <dbReference type="EC" id="4.1.1.32"/>
    </reaction>
</comment>
<comment type="cofactor">
    <cofactor evidence="1">
        <name>Mn(2+)</name>
        <dbReference type="ChEBI" id="CHEBI:29035"/>
    </cofactor>
    <text evidence="1">Binds 1 Mn(2+) ion per subunit.</text>
</comment>
<comment type="pathway">
    <text evidence="1">Carbohydrate biosynthesis; gluconeogenesis.</text>
</comment>
<comment type="subunit">
    <text evidence="1 3">Monomer.</text>
</comment>
<comment type="subcellular location">
    <subcellularLocation>
        <location evidence="1">Cytoplasm</location>
    </subcellularLocation>
</comment>
<comment type="disruption phenotype">
    <text evidence="2">Cells lacking this gene lead to the absence of PEP carboxykinase activity and the inability to grow on acetate or lactate.</text>
</comment>
<comment type="miscellaneous">
    <text evidence="2">The presence and the level of PEP carboxykinase activity has a strong influence on the biosynthesis of glutamate and a weak influence on the biosynthesis of lysine.</text>
</comment>
<comment type="similarity">
    <text evidence="1">Belongs to the phosphoenolpyruvate carboxykinase [GTP] family.</text>
</comment>
<dbReference type="EC" id="4.1.1.32" evidence="1"/>
<dbReference type="EMBL" id="AJ269506">
    <property type="protein sequence ID" value="CAC36295.1"/>
    <property type="molecule type" value="Genomic_DNA"/>
</dbReference>
<dbReference type="EMBL" id="BA000036">
    <property type="protein sequence ID" value="BAC00257.1"/>
    <property type="molecule type" value="Genomic_DNA"/>
</dbReference>
<dbReference type="EMBL" id="BX927156">
    <property type="protein sequence ID" value="CAF20888.1"/>
    <property type="molecule type" value="Genomic_DNA"/>
</dbReference>
<dbReference type="RefSeq" id="NP_602055.1">
    <property type="nucleotide sequence ID" value="NC_003450.3"/>
</dbReference>
<dbReference type="RefSeq" id="WP_011015446.1">
    <property type="nucleotide sequence ID" value="NC_006958.1"/>
</dbReference>
<dbReference type="PDB" id="2ZCI">
    <property type="method" value="X-ray"/>
    <property type="resolution" value="2.30 A"/>
    <property type="chains" value="A/B/C/D=1-610"/>
</dbReference>
<dbReference type="PDBsum" id="2ZCI"/>
<dbReference type="SMR" id="Q9AEM1"/>
<dbReference type="STRING" id="196627.cg3169"/>
<dbReference type="KEGG" id="cgb:cg3169"/>
<dbReference type="KEGG" id="cgl:Cgl2863"/>
<dbReference type="PATRIC" id="fig|196627.13.peg.2795"/>
<dbReference type="eggNOG" id="COG1274">
    <property type="taxonomic scope" value="Bacteria"/>
</dbReference>
<dbReference type="HOGENOM" id="CLU_028872_1_1_11"/>
<dbReference type="OrthoDB" id="9758871at2"/>
<dbReference type="BioCyc" id="CORYNE:G18NG-12481-MONOMER"/>
<dbReference type="BRENDA" id="4.1.1.32">
    <property type="organism ID" value="960"/>
</dbReference>
<dbReference type="UniPathway" id="UPA00138"/>
<dbReference type="EvolutionaryTrace" id="Q9AEM1"/>
<dbReference type="Proteomes" id="UP000000582">
    <property type="component" value="Chromosome"/>
</dbReference>
<dbReference type="Proteomes" id="UP000001009">
    <property type="component" value="Chromosome"/>
</dbReference>
<dbReference type="GO" id="GO:0005829">
    <property type="term" value="C:cytosol"/>
    <property type="evidence" value="ECO:0007669"/>
    <property type="project" value="TreeGrafter"/>
</dbReference>
<dbReference type="GO" id="GO:0005525">
    <property type="term" value="F:GTP binding"/>
    <property type="evidence" value="ECO:0007669"/>
    <property type="project" value="UniProtKB-UniRule"/>
</dbReference>
<dbReference type="GO" id="GO:0030145">
    <property type="term" value="F:manganese ion binding"/>
    <property type="evidence" value="ECO:0007669"/>
    <property type="project" value="UniProtKB-UniRule"/>
</dbReference>
<dbReference type="GO" id="GO:0004613">
    <property type="term" value="F:phosphoenolpyruvate carboxykinase (GTP) activity"/>
    <property type="evidence" value="ECO:0007669"/>
    <property type="project" value="UniProtKB-UniRule"/>
</dbReference>
<dbReference type="GO" id="GO:0071333">
    <property type="term" value="P:cellular response to glucose stimulus"/>
    <property type="evidence" value="ECO:0007669"/>
    <property type="project" value="TreeGrafter"/>
</dbReference>
<dbReference type="GO" id="GO:0006094">
    <property type="term" value="P:gluconeogenesis"/>
    <property type="evidence" value="ECO:0007669"/>
    <property type="project" value="UniProtKB-UniRule"/>
</dbReference>
<dbReference type="GO" id="GO:0046327">
    <property type="term" value="P:glycerol biosynthetic process from pyruvate"/>
    <property type="evidence" value="ECO:0007669"/>
    <property type="project" value="TreeGrafter"/>
</dbReference>
<dbReference type="GO" id="GO:0006107">
    <property type="term" value="P:oxaloacetate metabolic process"/>
    <property type="evidence" value="ECO:0007669"/>
    <property type="project" value="TreeGrafter"/>
</dbReference>
<dbReference type="GO" id="GO:0019543">
    <property type="term" value="P:propionate catabolic process"/>
    <property type="evidence" value="ECO:0007669"/>
    <property type="project" value="TreeGrafter"/>
</dbReference>
<dbReference type="GO" id="GO:0033993">
    <property type="term" value="P:response to lipid"/>
    <property type="evidence" value="ECO:0007669"/>
    <property type="project" value="TreeGrafter"/>
</dbReference>
<dbReference type="GO" id="GO:0042594">
    <property type="term" value="P:response to starvation"/>
    <property type="evidence" value="ECO:0007669"/>
    <property type="project" value="TreeGrafter"/>
</dbReference>
<dbReference type="CDD" id="cd00819">
    <property type="entry name" value="PEPCK_GTP"/>
    <property type="match status" value="1"/>
</dbReference>
<dbReference type="FunFam" id="3.40.449.10:FF:000005">
    <property type="entry name" value="Phosphoenolpyruvate carboxykinase [GTP]"/>
    <property type="match status" value="1"/>
</dbReference>
<dbReference type="Gene3D" id="3.90.228.20">
    <property type="match status" value="1"/>
</dbReference>
<dbReference type="Gene3D" id="3.40.449.10">
    <property type="entry name" value="Phosphoenolpyruvate Carboxykinase, domain 1"/>
    <property type="match status" value="1"/>
</dbReference>
<dbReference type="Gene3D" id="2.170.8.10">
    <property type="entry name" value="Phosphoenolpyruvate Carboxykinase, domain 2"/>
    <property type="match status" value="1"/>
</dbReference>
<dbReference type="HAMAP" id="MF_00452">
    <property type="entry name" value="PEPCK_GTP"/>
    <property type="match status" value="1"/>
</dbReference>
<dbReference type="InterPro" id="IPR018091">
    <property type="entry name" value="PEP_carboxykin_GTP_CS"/>
</dbReference>
<dbReference type="InterPro" id="IPR013035">
    <property type="entry name" value="PEP_carboxykinase_C"/>
</dbReference>
<dbReference type="InterPro" id="IPR008209">
    <property type="entry name" value="PEP_carboxykinase_GTP"/>
</dbReference>
<dbReference type="InterPro" id="IPR035077">
    <property type="entry name" value="PEP_carboxykinase_GTP_C"/>
</dbReference>
<dbReference type="InterPro" id="IPR035078">
    <property type="entry name" value="PEP_carboxykinase_GTP_N"/>
</dbReference>
<dbReference type="InterPro" id="IPR008210">
    <property type="entry name" value="PEP_carboxykinase_N"/>
</dbReference>
<dbReference type="NCBIfam" id="NF003253">
    <property type="entry name" value="PRK04210.1"/>
    <property type="match status" value="1"/>
</dbReference>
<dbReference type="PANTHER" id="PTHR11561">
    <property type="entry name" value="PHOSPHOENOLPYRUVATE CARBOXYKINASE"/>
    <property type="match status" value="1"/>
</dbReference>
<dbReference type="PANTHER" id="PTHR11561:SF0">
    <property type="entry name" value="PHOSPHOENOLPYRUVATE CARBOXYKINASE [GTP]-RELATED"/>
    <property type="match status" value="1"/>
</dbReference>
<dbReference type="Pfam" id="PF00821">
    <property type="entry name" value="PEPCK_GTP"/>
    <property type="match status" value="1"/>
</dbReference>
<dbReference type="Pfam" id="PF17297">
    <property type="entry name" value="PEPCK_N"/>
    <property type="match status" value="1"/>
</dbReference>
<dbReference type="PIRSF" id="PIRSF001348">
    <property type="entry name" value="PEP_carboxykinase_GTP"/>
    <property type="match status" value="1"/>
</dbReference>
<dbReference type="SUPFAM" id="SSF68923">
    <property type="entry name" value="PEP carboxykinase N-terminal domain"/>
    <property type="match status" value="1"/>
</dbReference>
<dbReference type="SUPFAM" id="SSF53795">
    <property type="entry name" value="PEP carboxykinase-like"/>
    <property type="match status" value="1"/>
</dbReference>
<dbReference type="PROSITE" id="PS00505">
    <property type="entry name" value="PEPCK_GTP"/>
    <property type="match status" value="1"/>
</dbReference>
<name>PCKG_CORGL</name>
<sequence length="610" mass="66874">MTTAAIRGLQGEAPTKNKELLNWIADAVELFQPEAVVFVDGSQAEWDRMAEDLVEAGTLIKLNEEKRPNSYLARSNPSDVARVESRTFICSEKEEDAGPTNNWAPPQAMKDEMSKHYAGSMKGRTMYVVPFCMGPISDPDPKLGVQLTDSEYVVMSMRIMTRMGIEALDKIGANGSFVRCLHSVGAPLEPGQEDVAWPCNDTKYITQFPETKEIWSYGSGYGGNAILAKKCYALRIASVMAREEGWMAEHMLILKLINPEGKAYHIAAAFPSACGKTNLAMITPTIPGWTAQVVGDDIAWLKLREDGLYAVNPENGFFGVAPGTNYASNPIAMKTMEPGNTLFTNVALTDDGDIWWEGMDGDAPAHLIDWMGNDWTPESDENAAHPNSRYCVAIDQSPAAAPEFNDWEGVKIDAILFGGRRADTVPLVTQTYDWEHGTMVGALLASGQTAASAEAKVGTLRHDPMAMLPFIGYNAGEYLQNWIDMGNKGGDKMPSIFLVNWFRRGEDGRFLWPGFGDNSRVLKWVIDRIEGHVGADETVVGHTAKAEDLDLDGLDTPIEDVKEALTAPAEQWANDVEDNAEYLTFLGPRVPAEVHSQFDALKARISAAHA</sequence>
<organism>
    <name type="scientific">Corynebacterium glutamicum (strain ATCC 13032 / DSM 20300 / JCM 1318 / BCRC 11384 / CCUG 27702 / LMG 3730 / NBRC 12168 / NCIMB 10025 / NRRL B-2784 / 534)</name>
    <dbReference type="NCBI Taxonomy" id="196627"/>
    <lineage>
        <taxon>Bacteria</taxon>
        <taxon>Bacillati</taxon>
        <taxon>Actinomycetota</taxon>
        <taxon>Actinomycetes</taxon>
        <taxon>Mycobacteriales</taxon>
        <taxon>Corynebacteriaceae</taxon>
        <taxon>Corynebacterium</taxon>
    </lineage>
</organism>
<reference key="1">
    <citation type="journal article" date="2001" name="J. Mol. Microbiol. Biotechnol.">
        <title>Characterization of the phosphoenolpyruvate carboxykinase gene from Corynebacterium glutamicum and significance of the enzyme for growth and amino acid production.</title>
        <authorList>
            <person name="Riedel C."/>
            <person name="Rittmann D."/>
            <person name="Dangel P."/>
            <person name="Mockel B."/>
            <person name="Petersen S."/>
            <person name="Sahm H."/>
            <person name="Eikmanns B.J."/>
        </authorList>
    </citation>
    <scope>NUCLEOTIDE SEQUENCE [GENOMIC DNA]</scope>
    <scope>FUNCTION</scope>
    <scope>DISRUPTION PHENOTYPE</scope>
    <source>
        <strain>ATCC 13032 / DSM 20300 / JCM 1318 / BCRC 11384 / CCUG 27702 / LMG 3730 / NBRC 12168 / NCIMB 10025 / NRRL B-2784 / 534</strain>
    </source>
</reference>
<reference key="2">
    <citation type="journal article" date="2003" name="Appl. Microbiol. Biotechnol.">
        <title>The Corynebacterium glutamicum genome: features and impacts on biotechnological processes.</title>
        <authorList>
            <person name="Ikeda M."/>
            <person name="Nakagawa S."/>
        </authorList>
    </citation>
    <scope>NUCLEOTIDE SEQUENCE [LARGE SCALE GENOMIC DNA]</scope>
    <source>
        <strain>ATCC 13032 / DSM 20300 / JCM 1318 / BCRC 11384 / CCUG 27702 / LMG 3730 / NBRC 12168 / NCIMB 10025 / NRRL B-2784 / 534</strain>
    </source>
</reference>
<reference key="3">
    <citation type="journal article" date="2003" name="J. Biotechnol.">
        <title>The complete Corynebacterium glutamicum ATCC 13032 genome sequence and its impact on the production of L-aspartate-derived amino acids and vitamins.</title>
        <authorList>
            <person name="Kalinowski J."/>
            <person name="Bathe B."/>
            <person name="Bartels D."/>
            <person name="Bischoff N."/>
            <person name="Bott M."/>
            <person name="Burkovski A."/>
            <person name="Dusch N."/>
            <person name="Eggeling L."/>
            <person name="Eikmanns B.J."/>
            <person name="Gaigalat L."/>
            <person name="Goesmann A."/>
            <person name="Hartmann M."/>
            <person name="Huthmacher K."/>
            <person name="Kraemer R."/>
            <person name="Linke B."/>
            <person name="McHardy A.C."/>
            <person name="Meyer F."/>
            <person name="Moeckel B."/>
            <person name="Pfefferle W."/>
            <person name="Puehler A."/>
            <person name="Rey D.A."/>
            <person name="Rueckert C."/>
            <person name="Rupp O."/>
            <person name="Sahm H."/>
            <person name="Wendisch V.F."/>
            <person name="Wiegraebe I."/>
            <person name="Tauch A."/>
        </authorList>
    </citation>
    <scope>NUCLEOTIDE SEQUENCE [LARGE SCALE GENOMIC DNA]</scope>
    <source>
        <strain>ATCC 13032 / DSM 20300 / JCM 1318 / BCRC 11384 / CCUG 27702 / LMG 3730 / NBRC 12168 / NCIMB 10025 / NRRL B-2784 / 534</strain>
    </source>
</reference>
<reference key="4">
    <citation type="journal article" date="2008" name="Int. J. Biochem. Cell Biol.">
        <title>Structure of a GTP-dependent bacterial PEP-carboxykinase from Corynebacterium glutamicum.</title>
        <authorList>
            <person name="Aich S."/>
            <person name="Prasad L."/>
            <person name="Delbaere L.T.J."/>
        </authorList>
    </citation>
    <scope>X-RAY CRYSTALLOGRAPHY (2.3 ANGSTROMS)</scope>
    <scope>SUBUNIT</scope>
</reference>
<proteinExistence type="evidence at protein level"/>
<feature type="chain" id="PRO_0000103603" description="Phosphoenolpyruvate carboxykinase [GTP]">
    <location>
        <begin position="1"/>
        <end position="610"/>
    </location>
</feature>
<feature type="active site" evidence="1">
    <location>
        <position position="274"/>
    </location>
</feature>
<feature type="binding site" evidence="1">
    <location>
        <position position="82"/>
    </location>
    <ligand>
        <name>substrate</name>
    </ligand>
</feature>
<feature type="binding site" evidence="1">
    <location>
        <begin position="221"/>
        <end position="223"/>
    </location>
    <ligand>
        <name>substrate</name>
    </ligand>
</feature>
<feature type="binding site" evidence="1">
    <location>
        <position position="230"/>
    </location>
    <ligand>
        <name>Mn(2+)</name>
        <dbReference type="ChEBI" id="CHEBI:29035"/>
    </ligand>
</feature>
<feature type="binding site" evidence="1">
    <location>
        <position position="250"/>
    </location>
    <ligand>
        <name>Mn(2+)</name>
        <dbReference type="ChEBI" id="CHEBI:29035"/>
    </ligand>
</feature>
<feature type="binding site" evidence="1">
    <location>
        <position position="272"/>
    </location>
    <ligand>
        <name>substrate</name>
    </ligand>
</feature>
<feature type="binding site" evidence="1">
    <location>
        <begin position="273"/>
        <end position="278"/>
    </location>
    <ligand>
        <name>GTP</name>
        <dbReference type="ChEBI" id="CHEBI:37565"/>
    </ligand>
</feature>
<feature type="binding site" evidence="1">
    <location>
        <position position="297"/>
    </location>
    <ligand>
        <name>Mn(2+)</name>
        <dbReference type="ChEBI" id="CHEBI:29035"/>
    </ligand>
</feature>
<feature type="binding site" evidence="1">
    <location>
        <begin position="387"/>
        <end position="389"/>
    </location>
    <ligand>
        <name>substrate</name>
    </ligand>
</feature>
<feature type="binding site" evidence="1">
    <location>
        <position position="389"/>
    </location>
    <ligand>
        <name>GTP</name>
        <dbReference type="ChEBI" id="CHEBI:37565"/>
    </ligand>
</feature>
<feature type="binding site" evidence="1">
    <location>
        <position position="420"/>
    </location>
    <ligand>
        <name>GTP</name>
        <dbReference type="ChEBI" id="CHEBI:37565"/>
    </ligand>
</feature>
<feature type="binding site" evidence="1">
    <location>
        <begin position="515"/>
        <end position="518"/>
    </location>
    <ligand>
        <name>GTP</name>
        <dbReference type="ChEBI" id="CHEBI:37565"/>
    </ligand>
</feature>
<feature type="helix" evidence="6">
    <location>
        <begin position="18"/>
        <end position="31"/>
    </location>
</feature>
<feature type="strand" evidence="6">
    <location>
        <begin position="34"/>
        <end position="38"/>
    </location>
</feature>
<feature type="helix" evidence="6">
    <location>
        <begin position="43"/>
        <end position="55"/>
    </location>
</feature>
<feature type="strand" evidence="6">
    <location>
        <begin position="58"/>
        <end position="61"/>
    </location>
</feature>
<feature type="turn" evidence="6">
    <location>
        <begin position="64"/>
        <end position="66"/>
    </location>
</feature>
<feature type="strand" evidence="6">
    <location>
        <begin position="71"/>
        <end position="73"/>
    </location>
</feature>
<feature type="helix" evidence="6">
    <location>
        <begin position="77"/>
        <end position="79"/>
    </location>
</feature>
<feature type="helix" evidence="6">
    <location>
        <begin position="84"/>
        <end position="86"/>
    </location>
</feature>
<feature type="strand" evidence="6">
    <location>
        <begin position="87"/>
        <end position="89"/>
    </location>
</feature>
<feature type="turn" evidence="6">
    <location>
        <begin position="94"/>
        <end position="97"/>
    </location>
</feature>
<feature type="helix" evidence="6">
    <location>
        <begin position="106"/>
        <end position="117"/>
    </location>
</feature>
<feature type="turn" evidence="6">
    <location>
        <begin position="118"/>
        <end position="123"/>
    </location>
</feature>
<feature type="strand" evidence="6">
    <location>
        <begin position="124"/>
        <end position="134"/>
    </location>
</feature>
<feature type="strand" evidence="6">
    <location>
        <begin position="142"/>
        <end position="149"/>
    </location>
</feature>
<feature type="helix" evidence="6">
    <location>
        <begin position="151"/>
        <end position="160"/>
    </location>
</feature>
<feature type="strand" evidence="6">
    <location>
        <begin position="161"/>
        <end position="164"/>
    </location>
</feature>
<feature type="helix" evidence="6">
    <location>
        <begin position="165"/>
        <end position="171"/>
    </location>
</feature>
<feature type="turn" evidence="6">
    <location>
        <begin position="172"/>
        <end position="174"/>
    </location>
</feature>
<feature type="strand" evidence="6">
    <location>
        <begin position="178"/>
        <end position="183"/>
    </location>
</feature>
<feature type="strand" evidence="6">
    <location>
        <begin position="204"/>
        <end position="208"/>
    </location>
</feature>
<feature type="turn" evidence="6">
    <location>
        <begin position="209"/>
        <end position="212"/>
    </location>
</feature>
<feature type="strand" evidence="6">
    <location>
        <begin position="213"/>
        <end position="218"/>
    </location>
</feature>
<feature type="helix" evidence="6">
    <location>
        <begin position="222"/>
        <end position="225"/>
    </location>
</feature>
<feature type="helix" evidence="6">
    <location>
        <begin position="228"/>
        <end position="234"/>
    </location>
</feature>
<feature type="helix" evidence="6">
    <location>
        <begin position="235"/>
        <end position="244"/>
    </location>
</feature>
<feature type="strand" evidence="6">
    <location>
        <begin position="247"/>
        <end position="249"/>
    </location>
</feature>
<feature type="strand" evidence="6">
    <location>
        <begin position="252"/>
        <end position="257"/>
    </location>
</feature>
<feature type="strand" evidence="6">
    <location>
        <begin position="259"/>
        <end position="261"/>
    </location>
</feature>
<feature type="strand" evidence="6">
    <location>
        <begin position="263"/>
        <end position="269"/>
    </location>
</feature>
<feature type="strand" evidence="6">
    <location>
        <begin position="271"/>
        <end position="273"/>
    </location>
</feature>
<feature type="helix" evidence="6">
    <location>
        <begin position="274"/>
        <end position="280"/>
    </location>
</feature>
<feature type="strand" evidence="6">
    <location>
        <begin position="290"/>
        <end position="297"/>
    </location>
</feature>
<feature type="strand" evidence="6">
    <location>
        <begin position="299"/>
        <end position="303"/>
    </location>
</feature>
<feature type="strand" evidence="6">
    <location>
        <begin position="305"/>
        <end position="311"/>
    </location>
</feature>
<feature type="strand" evidence="6">
    <location>
        <begin position="315"/>
        <end position="320"/>
    </location>
</feature>
<feature type="turn" evidence="6">
    <location>
        <begin position="326"/>
        <end position="328"/>
    </location>
</feature>
<feature type="helix" evidence="6">
    <location>
        <begin position="330"/>
        <end position="336"/>
    </location>
</feature>
<feature type="strand" evidence="6">
    <location>
        <begin position="342"/>
        <end position="345"/>
    </location>
</feature>
<feature type="strand" evidence="6">
    <location>
        <begin position="347"/>
        <end position="349"/>
    </location>
</feature>
<feature type="strand" evidence="6">
    <location>
        <begin position="389"/>
        <end position="393"/>
    </location>
</feature>
<feature type="helix" evidence="6">
    <location>
        <begin position="394"/>
        <end position="396"/>
    </location>
</feature>
<feature type="helix" evidence="6">
    <location>
        <begin position="402"/>
        <end position="405"/>
    </location>
</feature>
<feature type="strand" evidence="6">
    <location>
        <begin position="413"/>
        <end position="418"/>
    </location>
</feature>
<feature type="strand" evidence="6">
    <location>
        <begin position="422"/>
        <end position="425"/>
    </location>
</feature>
<feature type="strand" evidence="6">
    <location>
        <begin position="427"/>
        <end position="430"/>
    </location>
</feature>
<feature type="helix" evidence="6">
    <location>
        <begin position="434"/>
        <end position="442"/>
    </location>
</feature>
<feature type="helix" evidence="6">
    <location>
        <begin position="464"/>
        <end position="466"/>
    </location>
</feature>
<feature type="turn" evidence="6">
    <location>
        <begin position="468"/>
        <end position="470"/>
    </location>
</feature>
<feature type="helix" evidence="6">
    <location>
        <begin position="475"/>
        <end position="489"/>
    </location>
</feature>
<feature type="helix" evidence="6">
    <location>
        <begin position="490"/>
        <end position="492"/>
    </location>
</feature>
<feature type="strand" evidence="6">
    <location>
        <begin position="495"/>
        <end position="499"/>
    </location>
</feature>
<feature type="strand" evidence="6">
    <location>
        <begin position="510"/>
        <end position="512"/>
    </location>
</feature>
<feature type="helix" evidence="6">
    <location>
        <begin position="515"/>
        <end position="517"/>
    </location>
</feature>
<feature type="helix" evidence="6">
    <location>
        <begin position="518"/>
        <end position="530"/>
    </location>
</feature>
<feature type="strand" evidence="6">
    <location>
        <begin position="539"/>
        <end position="543"/>
    </location>
</feature>
<feature type="helix" evidence="6">
    <location>
        <begin position="546"/>
        <end position="548"/>
    </location>
</feature>
<feature type="helix" evidence="6">
    <location>
        <begin position="561"/>
        <end position="565"/>
    </location>
</feature>
<feature type="helix" evidence="6">
    <location>
        <begin position="569"/>
        <end position="574"/>
    </location>
</feature>
<feature type="helix" evidence="6">
    <location>
        <begin position="576"/>
        <end position="585"/>
    </location>
</feature>
<feature type="helix" evidence="6">
    <location>
        <begin position="592"/>
        <end position="605"/>
    </location>
</feature>
<gene>
    <name evidence="1" type="primary">pckG</name>
    <name type="synonym">pck</name>
    <name type="ordered locus">Cgl2863</name>
    <name type="ordered locus">cg3169</name>
</gene>
<keyword id="KW-0002">3D-structure</keyword>
<keyword id="KW-0963">Cytoplasm</keyword>
<keyword id="KW-0210">Decarboxylase</keyword>
<keyword id="KW-0312">Gluconeogenesis</keyword>
<keyword id="KW-0342">GTP-binding</keyword>
<keyword id="KW-0456">Lyase</keyword>
<keyword id="KW-0464">Manganese</keyword>
<keyword id="KW-0479">Metal-binding</keyword>
<keyword id="KW-0547">Nucleotide-binding</keyword>
<keyword id="KW-1185">Reference proteome</keyword>
<evidence type="ECO:0000255" key="1">
    <source>
        <dbReference type="HAMAP-Rule" id="MF_00452"/>
    </source>
</evidence>
<evidence type="ECO:0000269" key="2">
    <source>
    </source>
</evidence>
<evidence type="ECO:0000269" key="3">
    <source>
    </source>
</evidence>
<evidence type="ECO:0000303" key="4">
    <source>
    </source>
</evidence>
<evidence type="ECO:0000303" key="5">
    <source>
    </source>
</evidence>
<evidence type="ECO:0007829" key="6">
    <source>
        <dbReference type="PDB" id="2ZCI"/>
    </source>
</evidence>
<accession>Q9AEM1</accession>
<protein>
    <recommendedName>
        <fullName evidence="1 4">Phosphoenolpyruvate carboxykinase [GTP]</fullName>
        <shortName evidence="1 4">PEP carboxykinase</shortName>
        <shortName evidence="1 4">PEPCK</shortName>
        <ecNumber evidence="1">4.1.1.32</ecNumber>
    </recommendedName>
    <alternativeName>
        <fullName evidence="1 5">GTP-dependent phosphoenolpyruvate carboxykinase</fullName>
        <shortName evidence="1 5">GTP-PEPCK</shortName>
    </alternativeName>
</protein>